<gene>
    <name type="primary">ssuC</name>
    <name type="synonym">ygaM</name>
    <name type="synonym">yzeB</name>
    <name type="ordered locus">BSU08850</name>
</gene>
<evidence type="ECO:0000255" key="1">
    <source>
        <dbReference type="PROSITE-ProRule" id="PRU00441"/>
    </source>
</evidence>
<evidence type="ECO:0000305" key="2"/>
<keyword id="KW-1003">Cell membrane</keyword>
<keyword id="KW-0472">Membrane</keyword>
<keyword id="KW-1185">Reference proteome</keyword>
<keyword id="KW-0812">Transmembrane</keyword>
<keyword id="KW-1133">Transmembrane helix</keyword>
<keyword id="KW-0813">Transport</keyword>
<name>SSUC_BACSU</name>
<reference key="1">
    <citation type="journal article" date="1994" name="Biochim. Biophys. Acta">
        <title>Isolation of Tn917 insertional mutants of Bacillus subtilis that are resistant to the protonophore carbonyl cyanide m-chlorophenylhydrazone.</title>
        <authorList>
            <person name="Quirk P.G."/>
            <person name="Guffanti A.A."/>
            <person name="Clejan S."/>
            <person name="Cheng J."/>
            <person name="Krulwich T.A."/>
        </authorList>
    </citation>
    <scope>NUCLEOTIDE SEQUENCE [GENOMIC DNA]</scope>
    <source>
        <strain>BD99 / MS11</strain>
    </source>
</reference>
<reference key="2">
    <citation type="journal article" date="1998" name="Microbiology">
        <title>Bacillus subtilis genes for the utilization of sulfur from aliphatic sulfonates.</title>
        <authorList>
            <person name="van der Ploeg J.R."/>
            <person name="Cummings N.J."/>
            <person name="Leisinger T."/>
            <person name="Connerton I.F."/>
        </authorList>
    </citation>
    <scope>NUCLEOTIDE SEQUENCE [GENOMIC DNA]</scope>
    <source>
        <strain>168</strain>
    </source>
</reference>
<reference key="3">
    <citation type="journal article" date="1997" name="Nature">
        <title>The complete genome sequence of the Gram-positive bacterium Bacillus subtilis.</title>
        <authorList>
            <person name="Kunst F."/>
            <person name="Ogasawara N."/>
            <person name="Moszer I."/>
            <person name="Albertini A.M."/>
            <person name="Alloni G."/>
            <person name="Azevedo V."/>
            <person name="Bertero M.G."/>
            <person name="Bessieres P."/>
            <person name="Bolotin A."/>
            <person name="Borchert S."/>
            <person name="Borriss R."/>
            <person name="Boursier L."/>
            <person name="Brans A."/>
            <person name="Braun M."/>
            <person name="Brignell S.C."/>
            <person name="Bron S."/>
            <person name="Brouillet S."/>
            <person name="Bruschi C.V."/>
            <person name="Caldwell B."/>
            <person name="Capuano V."/>
            <person name="Carter N.M."/>
            <person name="Choi S.-K."/>
            <person name="Codani J.-J."/>
            <person name="Connerton I.F."/>
            <person name="Cummings N.J."/>
            <person name="Daniel R.A."/>
            <person name="Denizot F."/>
            <person name="Devine K.M."/>
            <person name="Duesterhoeft A."/>
            <person name="Ehrlich S.D."/>
            <person name="Emmerson P.T."/>
            <person name="Entian K.-D."/>
            <person name="Errington J."/>
            <person name="Fabret C."/>
            <person name="Ferrari E."/>
            <person name="Foulger D."/>
            <person name="Fritz C."/>
            <person name="Fujita M."/>
            <person name="Fujita Y."/>
            <person name="Fuma S."/>
            <person name="Galizzi A."/>
            <person name="Galleron N."/>
            <person name="Ghim S.-Y."/>
            <person name="Glaser P."/>
            <person name="Goffeau A."/>
            <person name="Golightly E.J."/>
            <person name="Grandi G."/>
            <person name="Guiseppi G."/>
            <person name="Guy B.J."/>
            <person name="Haga K."/>
            <person name="Haiech J."/>
            <person name="Harwood C.R."/>
            <person name="Henaut A."/>
            <person name="Hilbert H."/>
            <person name="Holsappel S."/>
            <person name="Hosono S."/>
            <person name="Hullo M.-F."/>
            <person name="Itaya M."/>
            <person name="Jones L.-M."/>
            <person name="Joris B."/>
            <person name="Karamata D."/>
            <person name="Kasahara Y."/>
            <person name="Klaerr-Blanchard M."/>
            <person name="Klein C."/>
            <person name="Kobayashi Y."/>
            <person name="Koetter P."/>
            <person name="Koningstein G."/>
            <person name="Krogh S."/>
            <person name="Kumano M."/>
            <person name="Kurita K."/>
            <person name="Lapidus A."/>
            <person name="Lardinois S."/>
            <person name="Lauber J."/>
            <person name="Lazarevic V."/>
            <person name="Lee S.-M."/>
            <person name="Levine A."/>
            <person name="Liu H."/>
            <person name="Masuda S."/>
            <person name="Mauel C."/>
            <person name="Medigue C."/>
            <person name="Medina N."/>
            <person name="Mellado R.P."/>
            <person name="Mizuno M."/>
            <person name="Moestl D."/>
            <person name="Nakai S."/>
            <person name="Noback M."/>
            <person name="Noone D."/>
            <person name="O'Reilly M."/>
            <person name="Ogawa K."/>
            <person name="Ogiwara A."/>
            <person name="Oudega B."/>
            <person name="Park S.-H."/>
            <person name="Parro V."/>
            <person name="Pohl T.M."/>
            <person name="Portetelle D."/>
            <person name="Porwollik S."/>
            <person name="Prescott A.M."/>
            <person name="Presecan E."/>
            <person name="Pujic P."/>
            <person name="Purnelle B."/>
            <person name="Rapoport G."/>
            <person name="Rey M."/>
            <person name="Reynolds S."/>
            <person name="Rieger M."/>
            <person name="Rivolta C."/>
            <person name="Rocha E."/>
            <person name="Roche B."/>
            <person name="Rose M."/>
            <person name="Sadaie Y."/>
            <person name="Sato T."/>
            <person name="Scanlan E."/>
            <person name="Schleich S."/>
            <person name="Schroeter R."/>
            <person name="Scoffone F."/>
            <person name="Sekiguchi J."/>
            <person name="Sekowska A."/>
            <person name="Seror S.J."/>
            <person name="Serror P."/>
            <person name="Shin B.-S."/>
            <person name="Soldo B."/>
            <person name="Sorokin A."/>
            <person name="Tacconi E."/>
            <person name="Takagi T."/>
            <person name="Takahashi H."/>
            <person name="Takemaru K."/>
            <person name="Takeuchi M."/>
            <person name="Tamakoshi A."/>
            <person name="Tanaka T."/>
            <person name="Terpstra P."/>
            <person name="Tognoni A."/>
            <person name="Tosato V."/>
            <person name="Uchiyama S."/>
            <person name="Vandenbol M."/>
            <person name="Vannier F."/>
            <person name="Vassarotti A."/>
            <person name="Viari A."/>
            <person name="Wambutt R."/>
            <person name="Wedler E."/>
            <person name="Wedler H."/>
            <person name="Weitzenegger T."/>
            <person name="Winters P."/>
            <person name="Wipat A."/>
            <person name="Yamamoto H."/>
            <person name="Yamane K."/>
            <person name="Yasumoto K."/>
            <person name="Yata K."/>
            <person name="Yoshida K."/>
            <person name="Yoshikawa H.-F."/>
            <person name="Zumstein E."/>
            <person name="Yoshikawa H."/>
            <person name="Danchin A."/>
        </authorList>
    </citation>
    <scope>NUCLEOTIDE SEQUENCE [LARGE SCALE GENOMIC DNA]</scope>
    <source>
        <strain>168</strain>
    </source>
</reference>
<comment type="function">
    <text>Part of a binding-protein-dependent transport system for aliphatic sulfonates. Probably responsible for the translocation of the substrate across the membrane.</text>
</comment>
<comment type="subcellular location">
    <subcellularLocation>
        <location evidence="2">Cell membrane</location>
        <topology evidence="1">Multi-pass membrane protein</topology>
    </subcellularLocation>
</comment>
<comment type="induction">
    <text>Repressed by sulfate and cysteine.</text>
</comment>
<comment type="similarity">
    <text evidence="2">Belongs to the binding-protein-dependent transport system permease family. CysTW subfamily.</text>
</comment>
<accession>P40401</accession>
<organism>
    <name type="scientific">Bacillus subtilis (strain 168)</name>
    <dbReference type="NCBI Taxonomy" id="224308"/>
    <lineage>
        <taxon>Bacteria</taxon>
        <taxon>Bacillati</taxon>
        <taxon>Bacillota</taxon>
        <taxon>Bacilli</taxon>
        <taxon>Bacillales</taxon>
        <taxon>Bacillaceae</taxon>
        <taxon>Bacillus</taxon>
    </lineage>
</organism>
<proteinExistence type="evidence at transcript level"/>
<dbReference type="EMBL" id="L16808">
    <property type="protein sequence ID" value="AAA64349.1"/>
    <property type="molecule type" value="Genomic_DNA"/>
</dbReference>
<dbReference type="EMBL" id="Z93102">
    <property type="protein sequence ID" value="CAB07522.1"/>
    <property type="molecule type" value="Genomic_DNA"/>
</dbReference>
<dbReference type="EMBL" id="AL009126">
    <property type="protein sequence ID" value="CAB12713.1"/>
    <property type="molecule type" value="Genomic_DNA"/>
</dbReference>
<dbReference type="PIR" id="I39928">
    <property type="entry name" value="I39928"/>
</dbReference>
<dbReference type="RefSeq" id="NP_388765.1">
    <property type="nucleotide sequence ID" value="NC_000964.3"/>
</dbReference>
<dbReference type="RefSeq" id="WP_010886451.1">
    <property type="nucleotide sequence ID" value="NZ_OZ025638.1"/>
</dbReference>
<dbReference type="SMR" id="P40401"/>
<dbReference type="FunCoup" id="P40401">
    <property type="interactions" value="486"/>
</dbReference>
<dbReference type="STRING" id="224308.BSU08850"/>
<dbReference type="PaxDb" id="224308-BSU08850"/>
<dbReference type="EnsemblBacteria" id="CAB12713">
    <property type="protein sequence ID" value="CAB12713"/>
    <property type="gene ID" value="BSU_08850"/>
</dbReference>
<dbReference type="GeneID" id="936208"/>
<dbReference type="KEGG" id="bsu:BSU08850"/>
<dbReference type="PATRIC" id="fig|224308.43.peg.926"/>
<dbReference type="eggNOG" id="COG0600">
    <property type="taxonomic scope" value="Bacteria"/>
</dbReference>
<dbReference type="InParanoid" id="P40401"/>
<dbReference type="OrthoDB" id="9804353at2"/>
<dbReference type="PhylomeDB" id="P40401"/>
<dbReference type="BioCyc" id="BSUB:BSU08850-MONOMER"/>
<dbReference type="Proteomes" id="UP000001570">
    <property type="component" value="Chromosome"/>
</dbReference>
<dbReference type="GO" id="GO:0005886">
    <property type="term" value="C:plasma membrane"/>
    <property type="evidence" value="ECO:0000318"/>
    <property type="project" value="GO_Central"/>
</dbReference>
<dbReference type="GO" id="GO:0055085">
    <property type="term" value="P:transmembrane transport"/>
    <property type="evidence" value="ECO:0007669"/>
    <property type="project" value="InterPro"/>
</dbReference>
<dbReference type="CDD" id="cd06261">
    <property type="entry name" value="TM_PBP2"/>
    <property type="match status" value="1"/>
</dbReference>
<dbReference type="FunFam" id="1.10.3720.10:FF:000003">
    <property type="entry name" value="Aliphatic sulfonate ABC transporter permease"/>
    <property type="match status" value="1"/>
</dbReference>
<dbReference type="Gene3D" id="1.10.3720.10">
    <property type="entry name" value="MetI-like"/>
    <property type="match status" value="1"/>
</dbReference>
<dbReference type="InterPro" id="IPR000515">
    <property type="entry name" value="MetI-like"/>
</dbReference>
<dbReference type="InterPro" id="IPR035906">
    <property type="entry name" value="MetI-like_sf"/>
</dbReference>
<dbReference type="PANTHER" id="PTHR30151:SF38">
    <property type="entry name" value="ALIPHATIC SULFONATES TRANSPORT PERMEASE PROTEIN SSUC-RELATED"/>
    <property type="match status" value="1"/>
</dbReference>
<dbReference type="PANTHER" id="PTHR30151">
    <property type="entry name" value="ALKANE SULFONATE ABC TRANSPORTER-RELATED, MEMBRANE SUBUNIT"/>
    <property type="match status" value="1"/>
</dbReference>
<dbReference type="Pfam" id="PF00528">
    <property type="entry name" value="BPD_transp_1"/>
    <property type="match status" value="1"/>
</dbReference>
<dbReference type="SUPFAM" id="SSF161098">
    <property type="entry name" value="MetI-like"/>
    <property type="match status" value="1"/>
</dbReference>
<dbReference type="PROSITE" id="PS50928">
    <property type="entry name" value="ABC_TM1"/>
    <property type="match status" value="1"/>
</dbReference>
<protein>
    <recommendedName>
        <fullName>Putative aliphatic sulfonates transport permease protein SsuC</fullName>
    </recommendedName>
</protein>
<sequence>MMKAEAAGSLPKTNAEAVRKKPGRKRYGWMKGLLLPAVIIAIWQVIGGLGVVSATVLPTPVTIVLTFKELILSGELFGHLQISIYRAALGFLLGAGLGLMIGILAGFSKRTELYLDPSLQMLRTVPHLAVTPLFILWFGFDEVSKILLIALGAFFPVYINTFNGIRGVDAKLFEVARVLEFKWHQQISKVILPAALPNILLGIRLSLGIAWLGLVVAELMGSSSGVGYMIMDARQFSQTNKVFAGIIIFAVVGKLTDSFVRLLERKLLKWRNSYEG</sequence>
<feature type="chain" id="PRO_0000060227" description="Putative aliphatic sulfonates transport permease protein SsuC">
    <location>
        <begin position="1"/>
        <end position="276"/>
    </location>
</feature>
<feature type="transmembrane region" description="Helical" evidence="1">
    <location>
        <begin position="32"/>
        <end position="52"/>
    </location>
</feature>
<feature type="transmembrane region" description="Helical" evidence="1">
    <location>
        <begin position="54"/>
        <end position="74"/>
    </location>
</feature>
<feature type="transmembrane region" description="Helical" evidence="1">
    <location>
        <begin position="87"/>
        <end position="107"/>
    </location>
</feature>
<feature type="transmembrane region" description="Helical" evidence="1">
    <location>
        <begin position="119"/>
        <end position="141"/>
    </location>
</feature>
<feature type="transmembrane region" description="Helical" evidence="1">
    <location>
        <begin position="146"/>
        <end position="168"/>
    </location>
</feature>
<feature type="transmembrane region" description="Helical" evidence="1">
    <location>
        <begin position="199"/>
        <end position="219"/>
    </location>
</feature>
<feature type="transmembrane region" description="Helical" evidence="1">
    <location>
        <begin position="242"/>
        <end position="262"/>
    </location>
</feature>
<feature type="domain" description="ABC transmembrane type-1" evidence="1">
    <location>
        <begin position="80"/>
        <end position="260"/>
    </location>
</feature>